<dbReference type="EC" id="5.3.1.5" evidence="1"/>
<dbReference type="EMBL" id="CP000454">
    <property type="protein sequence ID" value="ABK03809.1"/>
    <property type="molecule type" value="Genomic_DNA"/>
</dbReference>
<dbReference type="RefSeq" id="WP_011692272.1">
    <property type="nucleotide sequence ID" value="NC_008541.1"/>
</dbReference>
<dbReference type="SMR" id="A0JXN9"/>
<dbReference type="STRING" id="290399.Arth_2430"/>
<dbReference type="KEGG" id="art:Arth_2430"/>
<dbReference type="eggNOG" id="COG2115">
    <property type="taxonomic scope" value="Bacteria"/>
</dbReference>
<dbReference type="HOGENOM" id="CLU_060750_0_0_11"/>
<dbReference type="OrthoDB" id="9763981at2"/>
<dbReference type="Proteomes" id="UP000000754">
    <property type="component" value="Chromosome"/>
</dbReference>
<dbReference type="GO" id="GO:0005737">
    <property type="term" value="C:cytoplasm"/>
    <property type="evidence" value="ECO:0007669"/>
    <property type="project" value="UniProtKB-SubCell"/>
</dbReference>
<dbReference type="GO" id="GO:0000287">
    <property type="term" value="F:magnesium ion binding"/>
    <property type="evidence" value="ECO:0007669"/>
    <property type="project" value="UniProtKB-UniRule"/>
</dbReference>
<dbReference type="GO" id="GO:0009045">
    <property type="term" value="F:xylose isomerase activity"/>
    <property type="evidence" value="ECO:0007669"/>
    <property type="project" value="UniProtKB-UniRule"/>
</dbReference>
<dbReference type="GO" id="GO:0042732">
    <property type="term" value="P:D-xylose metabolic process"/>
    <property type="evidence" value="ECO:0007669"/>
    <property type="project" value="UniProtKB-UniRule"/>
</dbReference>
<dbReference type="Gene3D" id="3.20.20.150">
    <property type="entry name" value="Divalent-metal-dependent TIM barrel enzymes"/>
    <property type="match status" value="1"/>
</dbReference>
<dbReference type="HAMAP" id="MF_00455">
    <property type="entry name" value="Xylose_isom_A"/>
    <property type="match status" value="1"/>
</dbReference>
<dbReference type="InterPro" id="IPR036237">
    <property type="entry name" value="Xyl_isomerase-like_sf"/>
</dbReference>
<dbReference type="InterPro" id="IPR013022">
    <property type="entry name" value="Xyl_isomerase-like_TIM-brl"/>
</dbReference>
<dbReference type="InterPro" id="IPR013453">
    <property type="entry name" value="XylA_actinobac"/>
</dbReference>
<dbReference type="InterPro" id="IPR001998">
    <property type="entry name" value="Xylose_isomerase"/>
</dbReference>
<dbReference type="NCBIfam" id="TIGR02631">
    <property type="entry name" value="xylA_Arthro"/>
    <property type="match status" value="1"/>
</dbReference>
<dbReference type="PANTHER" id="PTHR48408">
    <property type="match status" value="1"/>
</dbReference>
<dbReference type="PANTHER" id="PTHR48408:SF1">
    <property type="entry name" value="XYLOSE ISOMERASE"/>
    <property type="match status" value="1"/>
</dbReference>
<dbReference type="Pfam" id="PF01261">
    <property type="entry name" value="AP_endonuc_2"/>
    <property type="match status" value="1"/>
</dbReference>
<dbReference type="PRINTS" id="PR00688">
    <property type="entry name" value="XYLOSISMRASE"/>
</dbReference>
<dbReference type="SUPFAM" id="SSF51658">
    <property type="entry name" value="Xylose isomerase-like"/>
    <property type="match status" value="1"/>
</dbReference>
<dbReference type="PROSITE" id="PS51415">
    <property type="entry name" value="XYLOSE_ISOMERASE"/>
    <property type="match status" value="1"/>
</dbReference>
<feature type="chain" id="PRO_1000026428" description="Xylose isomerase">
    <location>
        <begin position="1"/>
        <end position="395"/>
    </location>
</feature>
<feature type="active site" evidence="1">
    <location>
        <position position="54"/>
    </location>
</feature>
<feature type="active site" evidence="1">
    <location>
        <position position="57"/>
    </location>
</feature>
<feature type="binding site" evidence="1">
    <location>
        <position position="181"/>
    </location>
    <ligand>
        <name>Mg(2+)</name>
        <dbReference type="ChEBI" id="CHEBI:18420"/>
        <label>1</label>
    </ligand>
</feature>
<feature type="binding site" evidence="1">
    <location>
        <position position="217"/>
    </location>
    <ligand>
        <name>Mg(2+)</name>
        <dbReference type="ChEBI" id="CHEBI:18420"/>
        <label>1</label>
    </ligand>
</feature>
<feature type="binding site" evidence="1">
    <location>
        <position position="217"/>
    </location>
    <ligand>
        <name>Mg(2+)</name>
        <dbReference type="ChEBI" id="CHEBI:18420"/>
        <label>2</label>
    </ligand>
</feature>
<feature type="binding site" evidence="1">
    <location>
        <position position="220"/>
    </location>
    <ligand>
        <name>Mg(2+)</name>
        <dbReference type="ChEBI" id="CHEBI:18420"/>
        <label>2</label>
    </ligand>
</feature>
<feature type="binding site" evidence="1">
    <location>
        <position position="245"/>
    </location>
    <ligand>
        <name>Mg(2+)</name>
        <dbReference type="ChEBI" id="CHEBI:18420"/>
        <label>1</label>
    </ligand>
</feature>
<feature type="binding site" evidence="1">
    <location>
        <position position="255"/>
    </location>
    <ligand>
        <name>Mg(2+)</name>
        <dbReference type="ChEBI" id="CHEBI:18420"/>
        <label>2</label>
    </ligand>
</feature>
<feature type="binding site" evidence="1">
    <location>
        <position position="257"/>
    </location>
    <ligand>
        <name>Mg(2+)</name>
        <dbReference type="ChEBI" id="CHEBI:18420"/>
        <label>2</label>
    </ligand>
</feature>
<feature type="binding site" evidence="1">
    <location>
        <position position="293"/>
    </location>
    <ligand>
        <name>Mg(2+)</name>
        <dbReference type="ChEBI" id="CHEBI:18420"/>
        <label>1</label>
    </ligand>
</feature>
<name>XYLA_ARTS2</name>
<organism>
    <name type="scientific">Arthrobacter sp. (strain FB24)</name>
    <dbReference type="NCBI Taxonomy" id="290399"/>
    <lineage>
        <taxon>Bacteria</taxon>
        <taxon>Bacillati</taxon>
        <taxon>Actinomycetota</taxon>
        <taxon>Actinomycetes</taxon>
        <taxon>Micrococcales</taxon>
        <taxon>Micrococcaceae</taxon>
        <taxon>Arthrobacter</taxon>
    </lineage>
</organism>
<reference key="1">
    <citation type="journal article" date="2013" name="Stand. Genomic Sci.">
        <title>Complete genome sequence of Arthrobacter sp. strain FB24.</title>
        <authorList>
            <person name="Nakatsu C.H."/>
            <person name="Barabote R."/>
            <person name="Thompson S."/>
            <person name="Bruce D."/>
            <person name="Detter C."/>
            <person name="Brettin T."/>
            <person name="Han C."/>
            <person name="Beasley F."/>
            <person name="Chen W."/>
            <person name="Konopka A."/>
            <person name="Xie G."/>
        </authorList>
    </citation>
    <scope>NUCLEOTIDE SEQUENCE [LARGE SCALE GENOMIC DNA]</scope>
    <source>
        <strain>FB24</strain>
    </source>
</reference>
<accession>A0JXN9</accession>
<comment type="catalytic activity">
    <reaction evidence="1">
        <text>alpha-D-xylose = alpha-D-xylulofuranose</text>
        <dbReference type="Rhea" id="RHEA:22816"/>
        <dbReference type="ChEBI" id="CHEBI:28518"/>
        <dbReference type="ChEBI" id="CHEBI:188998"/>
        <dbReference type="EC" id="5.3.1.5"/>
    </reaction>
</comment>
<comment type="cofactor">
    <cofactor evidence="1">
        <name>Mg(2+)</name>
        <dbReference type="ChEBI" id="CHEBI:18420"/>
    </cofactor>
    <text evidence="1">Binds 2 magnesium ions per subunit.</text>
</comment>
<comment type="subunit">
    <text evidence="1">Homotetramer.</text>
</comment>
<comment type="subcellular location">
    <subcellularLocation>
        <location evidence="1">Cytoplasm</location>
    </subcellularLocation>
</comment>
<comment type="similarity">
    <text evidence="1">Belongs to the xylose isomerase family.</text>
</comment>
<proteinExistence type="inferred from homology"/>
<evidence type="ECO:0000255" key="1">
    <source>
        <dbReference type="HAMAP-Rule" id="MF_00455"/>
    </source>
</evidence>
<sequence length="395" mass="42917">MTLQPTPADRFTFGLWTVGWTGADPFGVATRPALDPVEAVHKLSELGAYGITFHDNDLVPFDATASERELILKNFKAALAETGLKTPMVTTNLFSHPVFKDGGFTSNDRSVRRFALSKVLQNIDLAAELGAETFVMWGGREGSEYDGSKDLSAALDRMKEGVDTAAAYIKDKGYGLRIALEPKPNEPRGDIFLPTVGHGLAFIAQLEHGDIVGLNPETGHEQMAGLNFTHGIAQALWAGKLFHIDLNGQRGIKYDQDLVFGHGDLTSAFFTVDLLENGFPNGGPKYDGPRHFDYKPSRTDGYDGVWESAKSNMSMYLLLKERALAFRADPDVQEALKTSGVFELGEPTLAAGETTADLLADASAFAEFDADAAAQRSFAFVRLNQLAIEHLLGAR</sequence>
<keyword id="KW-0119">Carbohydrate metabolism</keyword>
<keyword id="KW-0963">Cytoplasm</keyword>
<keyword id="KW-0413">Isomerase</keyword>
<keyword id="KW-0460">Magnesium</keyword>
<keyword id="KW-0479">Metal-binding</keyword>
<keyword id="KW-1185">Reference proteome</keyword>
<keyword id="KW-0859">Xylose metabolism</keyword>
<gene>
    <name evidence="1" type="primary">xylA</name>
    <name type="ordered locus">Arth_2430</name>
</gene>
<protein>
    <recommendedName>
        <fullName evidence="1">Xylose isomerase</fullName>
        <ecNumber evidence="1">5.3.1.5</ecNumber>
    </recommendedName>
</protein>